<comment type="function">
    <text evidence="1">Binds directly to 23S rRNA. The L1 stalk is quite mobile in the ribosome, and is involved in E site tRNA release.</text>
</comment>
<comment type="function">
    <text evidence="1">Protein L1 is also a translational repressor protein, it controls the translation of the L11 operon by binding to its mRNA.</text>
</comment>
<comment type="subunit">
    <text evidence="1">Part of the 50S ribosomal subunit.</text>
</comment>
<comment type="similarity">
    <text evidence="1">Belongs to the universal ribosomal protein uL1 family.</text>
</comment>
<keyword id="KW-1185">Reference proteome</keyword>
<keyword id="KW-0678">Repressor</keyword>
<keyword id="KW-0687">Ribonucleoprotein</keyword>
<keyword id="KW-0689">Ribosomal protein</keyword>
<keyword id="KW-0694">RNA-binding</keyword>
<keyword id="KW-0699">rRNA-binding</keyword>
<keyword id="KW-0810">Translation regulation</keyword>
<keyword id="KW-0820">tRNA-binding</keyword>
<dbReference type="EMBL" id="CP000529">
    <property type="protein sequence ID" value="ABM38939.1"/>
    <property type="molecule type" value="Genomic_DNA"/>
</dbReference>
<dbReference type="RefSeq" id="WP_011803006.1">
    <property type="nucleotide sequence ID" value="NC_008781.1"/>
</dbReference>
<dbReference type="SMR" id="A1VTG1"/>
<dbReference type="STRING" id="365044.Pnap_3643"/>
<dbReference type="KEGG" id="pna:Pnap_3643"/>
<dbReference type="eggNOG" id="COG0081">
    <property type="taxonomic scope" value="Bacteria"/>
</dbReference>
<dbReference type="HOGENOM" id="CLU_062853_0_0_4"/>
<dbReference type="OrthoDB" id="9803740at2"/>
<dbReference type="Proteomes" id="UP000000644">
    <property type="component" value="Chromosome"/>
</dbReference>
<dbReference type="GO" id="GO:0022625">
    <property type="term" value="C:cytosolic large ribosomal subunit"/>
    <property type="evidence" value="ECO:0007669"/>
    <property type="project" value="TreeGrafter"/>
</dbReference>
<dbReference type="GO" id="GO:0019843">
    <property type="term" value="F:rRNA binding"/>
    <property type="evidence" value="ECO:0007669"/>
    <property type="project" value="UniProtKB-UniRule"/>
</dbReference>
<dbReference type="GO" id="GO:0003735">
    <property type="term" value="F:structural constituent of ribosome"/>
    <property type="evidence" value="ECO:0007669"/>
    <property type="project" value="InterPro"/>
</dbReference>
<dbReference type="GO" id="GO:0000049">
    <property type="term" value="F:tRNA binding"/>
    <property type="evidence" value="ECO:0007669"/>
    <property type="project" value="UniProtKB-KW"/>
</dbReference>
<dbReference type="GO" id="GO:0006417">
    <property type="term" value="P:regulation of translation"/>
    <property type="evidence" value="ECO:0007669"/>
    <property type="project" value="UniProtKB-KW"/>
</dbReference>
<dbReference type="GO" id="GO:0006412">
    <property type="term" value="P:translation"/>
    <property type="evidence" value="ECO:0007669"/>
    <property type="project" value="UniProtKB-UniRule"/>
</dbReference>
<dbReference type="CDD" id="cd00403">
    <property type="entry name" value="Ribosomal_L1"/>
    <property type="match status" value="1"/>
</dbReference>
<dbReference type="FunFam" id="3.40.50.790:FF:000001">
    <property type="entry name" value="50S ribosomal protein L1"/>
    <property type="match status" value="1"/>
</dbReference>
<dbReference type="Gene3D" id="3.30.190.20">
    <property type="match status" value="1"/>
</dbReference>
<dbReference type="Gene3D" id="3.40.50.790">
    <property type="match status" value="1"/>
</dbReference>
<dbReference type="HAMAP" id="MF_01318_B">
    <property type="entry name" value="Ribosomal_uL1_B"/>
    <property type="match status" value="1"/>
</dbReference>
<dbReference type="InterPro" id="IPR005878">
    <property type="entry name" value="Ribosom_uL1_bac-type"/>
</dbReference>
<dbReference type="InterPro" id="IPR002143">
    <property type="entry name" value="Ribosomal_uL1"/>
</dbReference>
<dbReference type="InterPro" id="IPR023674">
    <property type="entry name" value="Ribosomal_uL1-like"/>
</dbReference>
<dbReference type="InterPro" id="IPR028364">
    <property type="entry name" value="Ribosomal_uL1/biogenesis"/>
</dbReference>
<dbReference type="InterPro" id="IPR016095">
    <property type="entry name" value="Ribosomal_uL1_3-a/b-sand"/>
</dbReference>
<dbReference type="InterPro" id="IPR023673">
    <property type="entry name" value="Ribosomal_uL1_CS"/>
</dbReference>
<dbReference type="NCBIfam" id="TIGR01169">
    <property type="entry name" value="rplA_bact"/>
    <property type="match status" value="1"/>
</dbReference>
<dbReference type="PANTHER" id="PTHR36427">
    <property type="entry name" value="54S RIBOSOMAL PROTEIN L1, MITOCHONDRIAL"/>
    <property type="match status" value="1"/>
</dbReference>
<dbReference type="PANTHER" id="PTHR36427:SF3">
    <property type="entry name" value="LARGE RIBOSOMAL SUBUNIT PROTEIN UL1M"/>
    <property type="match status" value="1"/>
</dbReference>
<dbReference type="Pfam" id="PF00687">
    <property type="entry name" value="Ribosomal_L1"/>
    <property type="match status" value="1"/>
</dbReference>
<dbReference type="PIRSF" id="PIRSF002155">
    <property type="entry name" value="Ribosomal_L1"/>
    <property type="match status" value="1"/>
</dbReference>
<dbReference type="SUPFAM" id="SSF56808">
    <property type="entry name" value="Ribosomal protein L1"/>
    <property type="match status" value="1"/>
</dbReference>
<dbReference type="PROSITE" id="PS01199">
    <property type="entry name" value="RIBOSOMAL_L1"/>
    <property type="match status" value="1"/>
</dbReference>
<accession>A1VTG1</accession>
<organism>
    <name type="scientific">Polaromonas naphthalenivorans (strain CJ2)</name>
    <dbReference type="NCBI Taxonomy" id="365044"/>
    <lineage>
        <taxon>Bacteria</taxon>
        <taxon>Pseudomonadati</taxon>
        <taxon>Pseudomonadota</taxon>
        <taxon>Betaproteobacteria</taxon>
        <taxon>Burkholderiales</taxon>
        <taxon>Comamonadaceae</taxon>
        <taxon>Polaromonas</taxon>
    </lineage>
</organism>
<sequence length="231" mass="23941">MSKLTKRQKTVGDKIDSNKLYALSDALGLVKEFAVAKFDESIDVAVQLGIDAKKSDQVVRGAVVLPNGTGKTKRVAVFAQGAKAEEAKAAGADIVGMDDLAADIKAGKMDFDVVIASPDAMRIVGTLGQILGPRGLMPNPKVGTVTPDVATAVRNAKAGQVQFRVDKAGIVHGTIGRRSFDTAKLQGNLAALVDALIKAKPATSKGVYLKKVAVSSTMGVGVRVDTQSIAA</sequence>
<feature type="chain" id="PRO_0000308069" description="Large ribosomal subunit protein uL1">
    <location>
        <begin position="1"/>
        <end position="231"/>
    </location>
</feature>
<evidence type="ECO:0000255" key="1">
    <source>
        <dbReference type="HAMAP-Rule" id="MF_01318"/>
    </source>
</evidence>
<evidence type="ECO:0000305" key="2"/>
<reference key="1">
    <citation type="journal article" date="2009" name="Environ. Microbiol.">
        <title>The genome of Polaromonas naphthalenivorans strain CJ2, isolated from coal tar-contaminated sediment, reveals physiological and metabolic versatility and evolution through extensive horizontal gene transfer.</title>
        <authorList>
            <person name="Yagi J.M."/>
            <person name="Sims D."/>
            <person name="Brettin T."/>
            <person name="Bruce D."/>
            <person name="Madsen E.L."/>
        </authorList>
    </citation>
    <scope>NUCLEOTIDE SEQUENCE [LARGE SCALE GENOMIC DNA]</scope>
    <source>
        <strain>CJ2</strain>
    </source>
</reference>
<proteinExistence type="inferred from homology"/>
<gene>
    <name evidence="1" type="primary">rplA</name>
    <name type="ordered locus">Pnap_3643</name>
</gene>
<protein>
    <recommendedName>
        <fullName evidence="1">Large ribosomal subunit protein uL1</fullName>
    </recommendedName>
    <alternativeName>
        <fullName evidence="2">50S ribosomal protein L1</fullName>
    </alternativeName>
</protein>
<name>RL1_POLNA</name>